<dbReference type="EMBL" id="BX908798">
    <property type="protein sequence ID" value="CAF23148.1"/>
    <property type="molecule type" value="Genomic_DNA"/>
</dbReference>
<dbReference type="RefSeq" id="WP_011174974.1">
    <property type="nucleotide sequence ID" value="NC_005861.2"/>
</dbReference>
<dbReference type="SMR" id="Q6ME51"/>
<dbReference type="STRING" id="264201.pc0424"/>
<dbReference type="KEGG" id="pcu:PC_RS02070"/>
<dbReference type="eggNOG" id="COG0094">
    <property type="taxonomic scope" value="Bacteria"/>
</dbReference>
<dbReference type="HOGENOM" id="CLU_061015_2_1_0"/>
<dbReference type="OrthoDB" id="9806626at2"/>
<dbReference type="Proteomes" id="UP000000529">
    <property type="component" value="Chromosome"/>
</dbReference>
<dbReference type="GO" id="GO:1990904">
    <property type="term" value="C:ribonucleoprotein complex"/>
    <property type="evidence" value="ECO:0007669"/>
    <property type="project" value="UniProtKB-KW"/>
</dbReference>
<dbReference type="GO" id="GO:0005840">
    <property type="term" value="C:ribosome"/>
    <property type="evidence" value="ECO:0007669"/>
    <property type="project" value="UniProtKB-KW"/>
</dbReference>
<dbReference type="GO" id="GO:0019843">
    <property type="term" value="F:rRNA binding"/>
    <property type="evidence" value="ECO:0007669"/>
    <property type="project" value="UniProtKB-UniRule"/>
</dbReference>
<dbReference type="GO" id="GO:0003735">
    <property type="term" value="F:structural constituent of ribosome"/>
    <property type="evidence" value="ECO:0007669"/>
    <property type="project" value="InterPro"/>
</dbReference>
<dbReference type="GO" id="GO:0000049">
    <property type="term" value="F:tRNA binding"/>
    <property type="evidence" value="ECO:0007669"/>
    <property type="project" value="UniProtKB-UniRule"/>
</dbReference>
<dbReference type="GO" id="GO:0006412">
    <property type="term" value="P:translation"/>
    <property type="evidence" value="ECO:0007669"/>
    <property type="project" value="UniProtKB-UniRule"/>
</dbReference>
<dbReference type="FunFam" id="3.30.1440.10:FF:000001">
    <property type="entry name" value="50S ribosomal protein L5"/>
    <property type="match status" value="1"/>
</dbReference>
<dbReference type="Gene3D" id="3.30.1440.10">
    <property type="match status" value="1"/>
</dbReference>
<dbReference type="HAMAP" id="MF_01333_B">
    <property type="entry name" value="Ribosomal_uL5_B"/>
    <property type="match status" value="1"/>
</dbReference>
<dbReference type="InterPro" id="IPR002132">
    <property type="entry name" value="Ribosomal_uL5"/>
</dbReference>
<dbReference type="InterPro" id="IPR020930">
    <property type="entry name" value="Ribosomal_uL5_bac-type"/>
</dbReference>
<dbReference type="InterPro" id="IPR031309">
    <property type="entry name" value="Ribosomal_uL5_C"/>
</dbReference>
<dbReference type="InterPro" id="IPR020929">
    <property type="entry name" value="Ribosomal_uL5_CS"/>
</dbReference>
<dbReference type="InterPro" id="IPR022803">
    <property type="entry name" value="Ribosomal_uL5_dom_sf"/>
</dbReference>
<dbReference type="InterPro" id="IPR031310">
    <property type="entry name" value="Ribosomal_uL5_N"/>
</dbReference>
<dbReference type="NCBIfam" id="NF000585">
    <property type="entry name" value="PRK00010.1"/>
    <property type="match status" value="1"/>
</dbReference>
<dbReference type="PANTHER" id="PTHR11994">
    <property type="entry name" value="60S RIBOSOMAL PROTEIN L11-RELATED"/>
    <property type="match status" value="1"/>
</dbReference>
<dbReference type="Pfam" id="PF00281">
    <property type="entry name" value="Ribosomal_L5"/>
    <property type="match status" value="1"/>
</dbReference>
<dbReference type="Pfam" id="PF00673">
    <property type="entry name" value="Ribosomal_L5_C"/>
    <property type="match status" value="1"/>
</dbReference>
<dbReference type="PIRSF" id="PIRSF002161">
    <property type="entry name" value="Ribosomal_L5"/>
    <property type="match status" value="1"/>
</dbReference>
<dbReference type="SUPFAM" id="SSF55282">
    <property type="entry name" value="RL5-like"/>
    <property type="match status" value="1"/>
</dbReference>
<dbReference type="PROSITE" id="PS00358">
    <property type="entry name" value="RIBOSOMAL_L5"/>
    <property type="match status" value="1"/>
</dbReference>
<evidence type="ECO:0000255" key="1">
    <source>
        <dbReference type="HAMAP-Rule" id="MF_01333"/>
    </source>
</evidence>
<evidence type="ECO:0000305" key="2"/>
<gene>
    <name evidence="1" type="primary">rplE</name>
    <name type="ordered locus">pc0424</name>
</gene>
<keyword id="KW-1185">Reference proteome</keyword>
<keyword id="KW-0687">Ribonucleoprotein</keyword>
<keyword id="KW-0689">Ribosomal protein</keyword>
<keyword id="KW-0694">RNA-binding</keyword>
<keyword id="KW-0699">rRNA-binding</keyword>
<keyword id="KW-0820">tRNA-binding</keyword>
<name>RL5_PARUW</name>
<sequence length="185" mass="20998">MSRLKKRYLADVKPELQKKFAYKNLMQVPGLVKVVINMGIAEASKDKNSIQDCVKEMTMLSGQKPVITKAKKAISNFKLREDQPIGVKVTLRGQRMFDFIDRFVNIVCPRIRDFRGFPSKCDGMGNYTLGLDDQQIFPEINLDEVKRTQGMHITFVTSAKTDEECVELLRLLGIPFKNLPISVAA</sequence>
<organism>
    <name type="scientific">Protochlamydia amoebophila (strain UWE25)</name>
    <dbReference type="NCBI Taxonomy" id="264201"/>
    <lineage>
        <taxon>Bacteria</taxon>
        <taxon>Pseudomonadati</taxon>
        <taxon>Chlamydiota</taxon>
        <taxon>Chlamydiia</taxon>
        <taxon>Parachlamydiales</taxon>
        <taxon>Parachlamydiaceae</taxon>
        <taxon>Candidatus Protochlamydia</taxon>
    </lineage>
</organism>
<feature type="chain" id="PRO_0000243034" description="Large ribosomal subunit protein uL5">
    <location>
        <begin position="1"/>
        <end position="185"/>
    </location>
</feature>
<comment type="function">
    <text evidence="1">This is one of the proteins that bind and probably mediate the attachment of the 5S RNA into the large ribosomal subunit, where it forms part of the central protuberance. In the 70S ribosome it contacts protein S13 of the 30S subunit (bridge B1b), connecting the 2 subunits; this bridge is implicated in subunit movement. Contacts the P site tRNA; the 5S rRNA and some of its associated proteins might help stabilize positioning of ribosome-bound tRNAs.</text>
</comment>
<comment type="subunit">
    <text evidence="1">Part of the 50S ribosomal subunit; part of the 5S rRNA/L5/L18/L25 subcomplex. Contacts the 5S rRNA and the P site tRNA. Forms a bridge to the 30S subunit in the 70S ribosome.</text>
</comment>
<comment type="similarity">
    <text evidence="1">Belongs to the universal ribosomal protein uL5 family.</text>
</comment>
<accession>Q6ME51</accession>
<reference key="1">
    <citation type="journal article" date="2004" name="Science">
        <title>Illuminating the evolutionary history of chlamydiae.</title>
        <authorList>
            <person name="Horn M."/>
            <person name="Collingro A."/>
            <person name="Schmitz-Esser S."/>
            <person name="Beier C.L."/>
            <person name="Purkhold U."/>
            <person name="Fartmann B."/>
            <person name="Brandt P."/>
            <person name="Nyakatura G.J."/>
            <person name="Droege M."/>
            <person name="Frishman D."/>
            <person name="Rattei T."/>
            <person name="Mewes H.-W."/>
            <person name="Wagner M."/>
        </authorList>
    </citation>
    <scope>NUCLEOTIDE SEQUENCE [LARGE SCALE GENOMIC DNA]</scope>
    <source>
        <strain>UWE25</strain>
    </source>
</reference>
<protein>
    <recommendedName>
        <fullName evidence="1">Large ribosomal subunit protein uL5</fullName>
    </recommendedName>
    <alternativeName>
        <fullName evidence="2">50S ribosomal protein L5</fullName>
    </alternativeName>
</protein>
<proteinExistence type="inferred from homology"/>